<keyword id="KW-0021">Allosteric enzyme</keyword>
<keyword id="KW-0119">Carbohydrate metabolism</keyword>
<keyword id="KW-1015">Disulfide bond</keyword>
<keyword id="KW-0378">Hydrolase</keyword>
<gene>
    <name evidence="1" type="primary">nagB</name>
    <name type="ordered locus">ECIAI39_0635</name>
</gene>
<sequence>MRLIPLTTAEQVGKWAARHIVNRINAFKPTADRPFVLGLPTGGTPMTTYKALVEMHKAGQVSFKHVVTFNMDEYVGLPKEHPESYYSFMHRNFFDHVDIPAENINLLNGNAPDIDAECRQYEEKIRSYGKIHLFMGGVGNDGHIAFNEPASSLASRTRIKTLTHDTRVANSRFFDNDVNQVPKYALTVGVGTLLDAEEVMILVLGSQKALALQAAVEGCVNHMWTISCLQLHPKAIMVCDEPSTMELKVKTLRYFNELEAENIKGL</sequence>
<name>NAGB_ECO7I</name>
<dbReference type="EC" id="3.5.99.6" evidence="1"/>
<dbReference type="EMBL" id="CU928164">
    <property type="protein sequence ID" value="CAR16772.1"/>
    <property type="molecule type" value="Genomic_DNA"/>
</dbReference>
<dbReference type="RefSeq" id="WP_001237072.1">
    <property type="nucleotide sequence ID" value="NC_011750.1"/>
</dbReference>
<dbReference type="RefSeq" id="YP_002406661.1">
    <property type="nucleotide sequence ID" value="NC_011750.1"/>
</dbReference>
<dbReference type="SMR" id="B7NMM9"/>
<dbReference type="STRING" id="585057.ECIAI39_0635"/>
<dbReference type="GeneID" id="93776807"/>
<dbReference type="KEGG" id="ect:ECIAI39_0635"/>
<dbReference type="PATRIC" id="fig|585057.6.peg.676"/>
<dbReference type="HOGENOM" id="CLU_049611_0_1_6"/>
<dbReference type="UniPathway" id="UPA00629">
    <property type="reaction ID" value="UER00684"/>
</dbReference>
<dbReference type="Proteomes" id="UP000000749">
    <property type="component" value="Chromosome"/>
</dbReference>
<dbReference type="GO" id="GO:0005829">
    <property type="term" value="C:cytosol"/>
    <property type="evidence" value="ECO:0007669"/>
    <property type="project" value="TreeGrafter"/>
</dbReference>
<dbReference type="GO" id="GO:0004342">
    <property type="term" value="F:glucosamine-6-phosphate deaminase activity"/>
    <property type="evidence" value="ECO:0007669"/>
    <property type="project" value="UniProtKB-UniRule"/>
</dbReference>
<dbReference type="GO" id="GO:0042802">
    <property type="term" value="F:identical protein binding"/>
    <property type="evidence" value="ECO:0007669"/>
    <property type="project" value="TreeGrafter"/>
</dbReference>
<dbReference type="GO" id="GO:0005975">
    <property type="term" value="P:carbohydrate metabolic process"/>
    <property type="evidence" value="ECO:0007669"/>
    <property type="project" value="InterPro"/>
</dbReference>
<dbReference type="GO" id="GO:0006043">
    <property type="term" value="P:glucosamine catabolic process"/>
    <property type="evidence" value="ECO:0007669"/>
    <property type="project" value="TreeGrafter"/>
</dbReference>
<dbReference type="GO" id="GO:0006046">
    <property type="term" value="P:N-acetylglucosamine catabolic process"/>
    <property type="evidence" value="ECO:0007669"/>
    <property type="project" value="TreeGrafter"/>
</dbReference>
<dbReference type="GO" id="GO:0019262">
    <property type="term" value="P:N-acetylneuraminate catabolic process"/>
    <property type="evidence" value="ECO:0007669"/>
    <property type="project" value="UniProtKB-UniRule"/>
</dbReference>
<dbReference type="CDD" id="cd01399">
    <property type="entry name" value="GlcN6P_deaminase"/>
    <property type="match status" value="1"/>
</dbReference>
<dbReference type="FunFam" id="3.40.50.1360:FF:000002">
    <property type="entry name" value="Glucosamine-6-phosphate deaminase"/>
    <property type="match status" value="1"/>
</dbReference>
<dbReference type="Gene3D" id="3.40.50.1360">
    <property type="match status" value="1"/>
</dbReference>
<dbReference type="HAMAP" id="MF_01241">
    <property type="entry name" value="GlcN6P_deamin"/>
    <property type="match status" value="1"/>
</dbReference>
<dbReference type="InterPro" id="IPR006148">
    <property type="entry name" value="Glc/Gal-6P_isomerase"/>
</dbReference>
<dbReference type="InterPro" id="IPR004547">
    <property type="entry name" value="Glucosamine6P_isomerase"/>
</dbReference>
<dbReference type="InterPro" id="IPR018321">
    <property type="entry name" value="Glucosamine6P_isomerase_CS"/>
</dbReference>
<dbReference type="InterPro" id="IPR037171">
    <property type="entry name" value="NagB/RpiA_transferase-like"/>
</dbReference>
<dbReference type="NCBIfam" id="TIGR00502">
    <property type="entry name" value="nagB"/>
    <property type="match status" value="1"/>
</dbReference>
<dbReference type="NCBIfam" id="NF001685">
    <property type="entry name" value="PRK00443.1-5"/>
    <property type="match status" value="1"/>
</dbReference>
<dbReference type="PANTHER" id="PTHR11280">
    <property type="entry name" value="GLUCOSAMINE-6-PHOSPHATE ISOMERASE"/>
    <property type="match status" value="1"/>
</dbReference>
<dbReference type="PANTHER" id="PTHR11280:SF5">
    <property type="entry name" value="GLUCOSAMINE-6-PHOSPHATE ISOMERASE"/>
    <property type="match status" value="1"/>
</dbReference>
<dbReference type="Pfam" id="PF01182">
    <property type="entry name" value="Glucosamine_iso"/>
    <property type="match status" value="1"/>
</dbReference>
<dbReference type="SUPFAM" id="SSF100950">
    <property type="entry name" value="NagB/RpiA/CoA transferase-like"/>
    <property type="match status" value="1"/>
</dbReference>
<dbReference type="PROSITE" id="PS01161">
    <property type="entry name" value="GLC_GALNAC_ISOMERASE"/>
    <property type="match status" value="1"/>
</dbReference>
<reference key="1">
    <citation type="journal article" date="2009" name="PLoS Genet.">
        <title>Organised genome dynamics in the Escherichia coli species results in highly diverse adaptive paths.</title>
        <authorList>
            <person name="Touchon M."/>
            <person name="Hoede C."/>
            <person name="Tenaillon O."/>
            <person name="Barbe V."/>
            <person name="Baeriswyl S."/>
            <person name="Bidet P."/>
            <person name="Bingen E."/>
            <person name="Bonacorsi S."/>
            <person name="Bouchier C."/>
            <person name="Bouvet O."/>
            <person name="Calteau A."/>
            <person name="Chiapello H."/>
            <person name="Clermont O."/>
            <person name="Cruveiller S."/>
            <person name="Danchin A."/>
            <person name="Diard M."/>
            <person name="Dossat C."/>
            <person name="Karoui M.E."/>
            <person name="Frapy E."/>
            <person name="Garry L."/>
            <person name="Ghigo J.M."/>
            <person name="Gilles A.M."/>
            <person name="Johnson J."/>
            <person name="Le Bouguenec C."/>
            <person name="Lescat M."/>
            <person name="Mangenot S."/>
            <person name="Martinez-Jehanne V."/>
            <person name="Matic I."/>
            <person name="Nassif X."/>
            <person name="Oztas S."/>
            <person name="Petit M.A."/>
            <person name="Pichon C."/>
            <person name="Rouy Z."/>
            <person name="Ruf C.S."/>
            <person name="Schneider D."/>
            <person name="Tourret J."/>
            <person name="Vacherie B."/>
            <person name="Vallenet D."/>
            <person name="Medigue C."/>
            <person name="Rocha E.P.C."/>
            <person name="Denamur E."/>
        </authorList>
    </citation>
    <scope>NUCLEOTIDE SEQUENCE [LARGE SCALE GENOMIC DNA]</scope>
    <source>
        <strain>IAI39 / ExPEC</strain>
    </source>
</reference>
<accession>B7NMM9</accession>
<comment type="function">
    <text evidence="1">Catalyzes the reversible isomerization-deamination of glucosamine 6-phosphate (GlcN6P) to form fructose 6-phosphate (Fru6P) and ammonium ion.</text>
</comment>
<comment type="catalytic activity">
    <reaction evidence="1">
        <text>alpha-D-glucosamine 6-phosphate + H2O = beta-D-fructose 6-phosphate + NH4(+)</text>
        <dbReference type="Rhea" id="RHEA:12172"/>
        <dbReference type="ChEBI" id="CHEBI:15377"/>
        <dbReference type="ChEBI" id="CHEBI:28938"/>
        <dbReference type="ChEBI" id="CHEBI:57634"/>
        <dbReference type="ChEBI" id="CHEBI:75989"/>
        <dbReference type="EC" id="3.5.99.6"/>
    </reaction>
</comment>
<comment type="activity regulation">
    <text evidence="1">Allosterically activated by N-acetylglucosamine 6-phosphate (GlcNAc6P).</text>
</comment>
<comment type="pathway">
    <text evidence="1">Amino-sugar metabolism; N-acetylneuraminate degradation; D-fructose 6-phosphate from N-acetylneuraminate: step 5/5.</text>
</comment>
<comment type="subunit">
    <text evidence="1">Homohexamer; trimer of disulfide-linked dimers.</text>
</comment>
<comment type="similarity">
    <text evidence="1">Belongs to the glucosamine/galactosamine-6-phosphate isomerase family. NagB subfamily.</text>
</comment>
<feature type="chain" id="PRO_1000139770" description="Glucosamine-6-phosphate deaminase">
    <location>
        <begin position="1"/>
        <end position="266"/>
    </location>
</feature>
<feature type="active site" description="Proton acceptor; for enolization step" evidence="1">
    <location>
        <position position="72"/>
    </location>
</feature>
<feature type="active site" description="For ring-opening step" evidence="1">
    <location>
        <position position="141"/>
    </location>
</feature>
<feature type="active site" description="Proton acceptor; for ring-opening step" evidence="1">
    <location>
        <position position="143"/>
    </location>
</feature>
<feature type="active site" description="For ring-opening step" evidence="1">
    <location>
        <position position="148"/>
    </location>
</feature>
<feature type="site" description="Part of the allosteric site" evidence="1">
    <location>
        <position position="151"/>
    </location>
</feature>
<feature type="site" description="Part of the allosteric site" evidence="1">
    <location>
        <position position="158"/>
    </location>
</feature>
<feature type="site" description="Part of the allosteric site" evidence="1">
    <location>
        <position position="160"/>
    </location>
</feature>
<feature type="site" description="Part of the allosteric site" evidence="1">
    <location>
        <position position="161"/>
    </location>
</feature>
<feature type="site" description="Part of the allosteric site" evidence="1">
    <location>
        <position position="254"/>
    </location>
</feature>
<feature type="disulfide bond" description="Interchain" evidence="1">
    <location>
        <position position="219"/>
    </location>
</feature>
<evidence type="ECO:0000255" key="1">
    <source>
        <dbReference type="HAMAP-Rule" id="MF_01241"/>
    </source>
</evidence>
<proteinExistence type="inferred from homology"/>
<protein>
    <recommendedName>
        <fullName evidence="1">Glucosamine-6-phosphate deaminase</fullName>
        <ecNumber evidence="1">3.5.99.6</ecNumber>
    </recommendedName>
    <alternativeName>
        <fullName evidence="1">GlcN6P deaminase</fullName>
        <shortName evidence="1">GNPDA</shortName>
    </alternativeName>
    <alternativeName>
        <fullName evidence="1">Glucosamine-6-phosphate isomerase</fullName>
    </alternativeName>
</protein>
<organism>
    <name type="scientific">Escherichia coli O7:K1 (strain IAI39 / ExPEC)</name>
    <dbReference type="NCBI Taxonomy" id="585057"/>
    <lineage>
        <taxon>Bacteria</taxon>
        <taxon>Pseudomonadati</taxon>
        <taxon>Pseudomonadota</taxon>
        <taxon>Gammaproteobacteria</taxon>
        <taxon>Enterobacterales</taxon>
        <taxon>Enterobacteriaceae</taxon>
        <taxon>Escherichia</taxon>
    </lineage>
</organism>